<evidence type="ECO:0000255" key="1">
    <source>
        <dbReference type="HAMAP-Rule" id="MF_00083"/>
    </source>
</evidence>
<feature type="chain" id="PRO_1000075355" description="Peptidyl-tRNA hydrolase">
    <location>
        <begin position="1"/>
        <end position="195"/>
    </location>
</feature>
<feature type="active site" description="Proton acceptor" evidence="1">
    <location>
        <position position="22"/>
    </location>
</feature>
<feature type="binding site" evidence="1">
    <location>
        <position position="17"/>
    </location>
    <ligand>
        <name>tRNA</name>
        <dbReference type="ChEBI" id="CHEBI:17843"/>
    </ligand>
</feature>
<feature type="binding site" evidence="1">
    <location>
        <position position="68"/>
    </location>
    <ligand>
        <name>tRNA</name>
        <dbReference type="ChEBI" id="CHEBI:17843"/>
    </ligand>
</feature>
<feature type="binding site" evidence="1">
    <location>
        <position position="70"/>
    </location>
    <ligand>
        <name>tRNA</name>
        <dbReference type="ChEBI" id="CHEBI:17843"/>
    </ligand>
</feature>
<feature type="binding site" evidence="1">
    <location>
        <position position="116"/>
    </location>
    <ligand>
        <name>tRNA</name>
        <dbReference type="ChEBI" id="CHEBI:17843"/>
    </ligand>
</feature>
<feature type="site" description="Discriminates between blocked and unblocked aminoacyl-tRNA" evidence="1">
    <location>
        <position position="12"/>
    </location>
</feature>
<feature type="site" description="Stabilizes the basic form of H active site to accept a proton" evidence="1">
    <location>
        <position position="95"/>
    </location>
</feature>
<gene>
    <name evidence="1" type="primary">pth</name>
    <name type="ordered locus">Sbal195_3436</name>
</gene>
<keyword id="KW-0963">Cytoplasm</keyword>
<keyword id="KW-0378">Hydrolase</keyword>
<keyword id="KW-0694">RNA-binding</keyword>
<keyword id="KW-0820">tRNA-binding</keyword>
<proteinExistence type="inferred from homology"/>
<organism>
    <name type="scientific">Shewanella baltica (strain OS195)</name>
    <dbReference type="NCBI Taxonomy" id="399599"/>
    <lineage>
        <taxon>Bacteria</taxon>
        <taxon>Pseudomonadati</taxon>
        <taxon>Pseudomonadota</taxon>
        <taxon>Gammaproteobacteria</taxon>
        <taxon>Alteromonadales</taxon>
        <taxon>Shewanellaceae</taxon>
        <taxon>Shewanella</taxon>
    </lineage>
</organism>
<reference key="1">
    <citation type="submission" date="2007-11" db="EMBL/GenBank/DDBJ databases">
        <title>Complete sequence of chromosome of Shewanella baltica OS195.</title>
        <authorList>
            <consortium name="US DOE Joint Genome Institute"/>
            <person name="Copeland A."/>
            <person name="Lucas S."/>
            <person name="Lapidus A."/>
            <person name="Barry K."/>
            <person name="Glavina del Rio T."/>
            <person name="Dalin E."/>
            <person name="Tice H."/>
            <person name="Pitluck S."/>
            <person name="Chain P."/>
            <person name="Malfatti S."/>
            <person name="Shin M."/>
            <person name="Vergez L."/>
            <person name="Schmutz J."/>
            <person name="Larimer F."/>
            <person name="Land M."/>
            <person name="Hauser L."/>
            <person name="Kyrpides N."/>
            <person name="Kim E."/>
            <person name="Brettar I."/>
            <person name="Rodrigues J."/>
            <person name="Konstantinidis K."/>
            <person name="Klappenbach J."/>
            <person name="Hofle M."/>
            <person name="Tiedje J."/>
            <person name="Richardson P."/>
        </authorList>
    </citation>
    <scope>NUCLEOTIDE SEQUENCE [LARGE SCALE GENOMIC DNA]</scope>
    <source>
        <strain>OS195</strain>
    </source>
</reference>
<protein>
    <recommendedName>
        <fullName evidence="1">Peptidyl-tRNA hydrolase</fullName>
        <shortName evidence="1">Pth</shortName>
        <ecNumber evidence="1">3.1.1.29</ecNumber>
    </recommendedName>
</protein>
<sequence>MSEIKLIVGLANPGAEYAHTRHNAGAWYVLELARICGVTLVADSKYFGLTARAVLHGKDVRLLIPTTYMNLSGKAVGALANFFRITPEEILVAHDELDLPPGVAKFKLGGGHGGHNGLKDIIAKLANDKNFYRLRLGIGHPGDKNQVSGYVLGKAPAKEQELIDAAIDEAVRSTEILFKQDMVKAMNRLHSFKAE</sequence>
<dbReference type="EC" id="3.1.1.29" evidence="1"/>
<dbReference type="EMBL" id="CP000891">
    <property type="protein sequence ID" value="ABX50598.1"/>
    <property type="molecule type" value="Genomic_DNA"/>
</dbReference>
<dbReference type="RefSeq" id="WP_006082736.1">
    <property type="nucleotide sequence ID" value="NC_009997.1"/>
</dbReference>
<dbReference type="SMR" id="A9KZZ0"/>
<dbReference type="GeneID" id="11773484"/>
<dbReference type="KEGG" id="sbn:Sbal195_3436"/>
<dbReference type="HOGENOM" id="CLU_062456_3_1_6"/>
<dbReference type="Proteomes" id="UP000000770">
    <property type="component" value="Chromosome"/>
</dbReference>
<dbReference type="GO" id="GO:0005737">
    <property type="term" value="C:cytoplasm"/>
    <property type="evidence" value="ECO:0007669"/>
    <property type="project" value="UniProtKB-SubCell"/>
</dbReference>
<dbReference type="GO" id="GO:0004045">
    <property type="term" value="F:peptidyl-tRNA hydrolase activity"/>
    <property type="evidence" value="ECO:0007669"/>
    <property type="project" value="UniProtKB-UniRule"/>
</dbReference>
<dbReference type="GO" id="GO:0000049">
    <property type="term" value="F:tRNA binding"/>
    <property type="evidence" value="ECO:0007669"/>
    <property type="project" value="UniProtKB-UniRule"/>
</dbReference>
<dbReference type="GO" id="GO:0006515">
    <property type="term" value="P:protein quality control for misfolded or incompletely synthesized proteins"/>
    <property type="evidence" value="ECO:0007669"/>
    <property type="project" value="UniProtKB-UniRule"/>
</dbReference>
<dbReference type="GO" id="GO:0072344">
    <property type="term" value="P:rescue of stalled ribosome"/>
    <property type="evidence" value="ECO:0007669"/>
    <property type="project" value="UniProtKB-UniRule"/>
</dbReference>
<dbReference type="CDD" id="cd00462">
    <property type="entry name" value="PTH"/>
    <property type="match status" value="1"/>
</dbReference>
<dbReference type="FunFam" id="3.40.50.1470:FF:000001">
    <property type="entry name" value="Peptidyl-tRNA hydrolase"/>
    <property type="match status" value="1"/>
</dbReference>
<dbReference type="Gene3D" id="3.40.50.1470">
    <property type="entry name" value="Peptidyl-tRNA hydrolase"/>
    <property type="match status" value="1"/>
</dbReference>
<dbReference type="HAMAP" id="MF_00083">
    <property type="entry name" value="Pept_tRNA_hydro_bact"/>
    <property type="match status" value="1"/>
</dbReference>
<dbReference type="InterPro" id="IPR001328">
    <property type="entry name" value="Pept_tRNA_hydro"/>
</dbReference>
<dbReference type="InterPro" id="IPR018171">
    <property type="entry name" value="Pept_tRNA_hydro_CS"/>
</dbReference>
<dbReference type="InterPro" id="IPR036416">
    <property type="entry name" value="Pept_tRNA_hydro_sf"/>
</dbReference>
<dbReference type="NCBIfam" id="TIGR00447">
    <property type="entry name" value="pth"/>
    <property type="match status" value="1"/>
</dbReference>
<dbReference type="PANTHER" id="PTHR17224">
    <property type="entry name" value="PEPTIDYL-TRNA HYDROLASE"/>
    <property type="match status" value="1"/>
</dbReference>
<dbReference type="PANTHER" id="PTHR17224:SF1">
    <property type="entry name" value="PEPTIDYL-TRNA HYDROLASE"/>
    <property type="match status" value="1"/>
</dbReference>
<dbReference type="Pfam" id="PF01195">
    <property type="entry name" value="Pept_tRNA_hydro"/>
    <property type="match status" value="1"/>
</dbReference>
<dbReference type="SUPFAM" id="SSF53178">
    <property type="entry name" value="Peptidyl-tRNA hydrolase-like"/>
    <property type="match status" value="1"/>
</dbReference>
<dbReference type="PROSITE" id="PS01196">
    <property type="entry name" value="PEPT_TRNA_HYDROL_2"/>
    <property type="match status" value="1"/>
</dbReference>
<name>PTH_SHEB9</name>
<comment type="function">
    <text evidence="1">Hydrolyzes ribosome-free peptidyl-tRNAs (with 1 or more amino acids incorporated), which drop off the ribosome during protein synthesis, or as a result of ribosome stalling.</text>
</comment>
<comment type="function">
    <text evidence="1">Catalyzes the release of premature peptidyl moieties from peptidyl-tRNA molecules trapped in stalled 50S ribosomal subunits, and thus maintains levels of free tRNAs and 50S ribosomes.</text>
</comment>
<comment type="catalytic activity">
    <reaction evidence="1">
        <text>an N-acyl-L-alpha-aminoacyl-tRNA + H2O = an N-acyl-L-amino acid + a tRNA + H(+)</text>
        <dbReference type="Rhea" id="RHEA:54448"/>
        <dbReference type="Rhea" id="RHEA-COMP:10123"/>
        <dbReference type="Rhea" id="RHEA-COMP:13883"/>
        <dbReference type="ChEBI" id="CHEBI:15377"/>
        <dbReference type="ChEBI" id="CHEBI:15378"/>
        <dbReference type="ChEBI" id="CHEBI:59874"/>
        <dbReference type="ChEBI" id="CHEBI:78442"/>
        <dbReference type="ChEBI" id="CHEBI:138191"/>
        <dbReference type="EC" id="3.1.1.29"/>
    </reaction>
</comment>
<comment type="subunit">
    <text evidence="1">Monomer.</text>
</comment>
<comment type="subcellular location">
    <subcellularLocation>
        <location evidence="1">Cytoplasm</location>
    </subcellularLocation>
</comment>
<comment type="similarity">
    <text evidence="1">Belongs to the PTH family.</text>
</comment>
<accession>A9KZZ0</accession>